<sequence>MGIVINLFLLVPASIVFFAAGFFLGRFFLERLGTTKVLEAEERAVQIVQEAQKEANEYKDLKVTEVNQEWKKKRREFDQEVVIKNNKFNQMQKQVQQREGQLKKQAQDNRDMERRLQDQRKENEQVQESVTLRAAELERIISEQNERLESISGLQSEDARQMLIDNMISKAREEATETIHQIHEEAEQEAERLAEKTLLTAIQRITFEQATENALSVVHIQTDELKGRIIGREGRNIKAFENATGVDIIVDDTPEVVILSCFDPLRRELAKLTLQKLLSEGVIHPVAIEKAYEDASKEIADVIMSAGEDALSSLQLPDMPAEVVKTVGKMKFHTVYGQNLLQHSREVAMLAGVMATELKLDARLAKRAGLLHDIGLVLPATDEPHAISGRNFLKRFNESGVVLNAIAAHHGEVEKESPIAELVDAANVISLSRPGARGAMTADGNVKRLESLEEIAKGFPGVIKTYALQAGREIRVIVEGDNVSDSQADVLAHDIAHKIESEAQYPGQIKVSIVREKRSVAYAK</sequence>
<feature type="chain" id="PRO_0000344925" description="Ribonuclease Y">
    <location>
        <begin position="1"/>
        <end position="524"/>
    </location>
</feature>
<feature type="transmembrane region" description="Helical" evidence="1">
    <location>
        <begin position="3"/>
        <end position="23"/>
    </location>
</feature>
<feature type="domain" description="KH" evidence="1">
    <location>
        <begin position="214"/>
        <end position="280"/>
    </location>
</feature>
<feature type="domain" description="HD" evidence="2">
    <location>
        <begin position="340"/>
        <end position="432"/>
    </location>
</feature>
<feature type="region of interest" description="Disordered" evidence="3">
    <location>
        <begin position="96"/>
        <end position="127"/>
    </location>
</feature>
<feature type="compositionally biased region" description="Basic and acidic residues" evidence="3">
    <location>
        <begin position="100"/>
        <end position="124"/>
    </location>
</feature>
<protein>
    <recommendedName>
        <fullName evidence="1">Ribonuclease Y</fullName>
        <shortName evidence="1">RNase Y</shortName>
        <ecNumber evidence="1">3.1.-.-</ecNumber>
    </recommendedName>
</protein>
<proteinExistence type="inferred from homology"/>
<accession>A4SF67</accession>
<organism>
    <name type="scientific">Chlorobium phaeovibrioides (strain DSM 265 / 1930)</name>
    <name type="common">Prosthecochloris vibrioformis (strain DSM 265)</name>
    <dbReference type="NCBI Taxonomy" id="290318"/>
    <lineage>
        <taxon>Bacteria</taxon>
        <taxon>Pseudomonadati</taxon>
        <taxon>Chlorobiota</taxon>
        <taxon>Chlorobiia</taxon>
        <taxon>Chlorobiales</taxon>
        <taxon>Chlorobiaceae</taxon>
        <taxon>Chlorobium/Pelodictyon group</taxon>
        <taxon>Chlorobium</taxon>
    </lineage>
</organism>
<comment type="function">
    <text evidence="1">Endoribonuclease that initiates mRNA decay.</text>
</comment>
<comment type="subcellular location">
    <subcellularLocation>
        <location evidence="1">Cell membrane</location>
        <topology evidence="1">Single-pass membrane protein</topology>
    </subcellularLocation>
</comment>
<comment type="similarity">
    <text evidence="1">Belongs to the RNase Y family.</text>
</comment>
<dbReference type="EC" id="3.1.-.-" evidence="1"/>
<dbReference type="EMBL" id="CP000607">
    <property type="protein sequence ID" value="ABP37126.1"/>
    <property type="molecule type" value="Genomic_DNA"/>
</dbReference>
<dbReference type="STRING" id="290318.Cvib_1112"/>
<dbReference type="KEGG" id="pvi:Cvib_1112"/>
<dbReference type="eggNOG" id="COG1418">
    <property type="taxonomic scope" value="Bacteria"/>
</dbReference>
<dbReference type="HOGENOM" id="CLU_028328_1_0_10"/>
<dbReference type="OrthoDB" id="9803205at2"/>
<dbReference type="GO" id="GO:0005886">
    <property type="term" value="C:plasma membrane"/>
    <property type="evidence" value="ECO:0007669"/>
    <property type="project" value="UniProtKB-SubCell"/>
</dbReference>
<dbReference type="GO" id="GO:0003723">
    <property type="term" value="F:RNA binding"/>
    <property type="evidence" value="ECO:0007669"/>
    <property type="project" value="UniProtKB-UniRule"/>
</dbReference>
<dbReference type="GO" id="GO:0004521">
    <property type="term" value="F:RNA endonuclease activity"/>
    <property type="evidence" value="ECO:0007669"/>
    <property type="project" value="UniProtKB-UniRule"/>
</dbReference>
<dbReference type="GO" id="GO:0006402">
    <property type="term" value="P:mRNA catabolic process"/>
    <property type="evidence" value="ECO:0007669"/>
    <property type="project" value="UniProtKB-UniRule"/>
</dbReference>
<dbReference type="CDD" id="cd00077">
    <property type="entry name" value="HDc"/>
    <property type="match status" value="1"/>
</dbReference>
<dbReference type="CDD" id="cd22431">
    <property type="entry name" value="KH-I_RNaseY"/>
    <property type="match status" value="1"/>
</dbReference>
<dbReference type="Gene3D" id="1.10.3210.10">
    <property type="entry name" value="Hypothetical protein af1432"/>
    <property type="match status" value="1"/>
</dbReference>
<dbReference type="Gene3D" id="3.30.1370.10">
    <property type="entry name" value="K Homology domain, type 1"/>
    <property type="match status" value="1"/>
</dbReference>
<dbReference type="HAMAP" id="MF_00335">
    <property type="entry name" value="RNase_Y"/>
    <property type="match status" value="1"/>
</dbReference>
<dbReference type="InterPro" id="IPR003607">
    <property type="entry name" value="HD/PDEase_dom"/>
</dbReference>
<dbReference type="InterPro" id="IPR006674">
    <property type="entry name" value="HD_domain"/>
</dbReference>
<dbReference type="InterPro" id="IPR006675">
    <property type="entry name" value="HDIG_dom"/>
</dbReference>
<dbReference type="InterPro" id="IPR004087">
    <property type="entry name" value="KH_dom"/>
</dbReference>
<dbReference type="InterPro" id="IPR004088">
    <property type="entry name" value="KH_dom_type_1"/>
</dbReference>
<dbReference type="InterPro" id="IPR036612">
    <property type="entry name" value="KH_dom_type_1_sf"/>
</dbReference>
<dbReference type="InterPro" id="IPR017705">
    <property type="entry name" value="Ribonuclease_Y"/>
</dbReference>
<dbReference type="InterPro" id="IPR022711">
    <property type="entry name" value="RNase_Y_N"/>
</dbReference>
<dbReference type="NCBIfam" id="TIGR00277">
    <property type="entry name" value="HDIG"/>
    <property type="match status" value="1"/>
</dbReference>
<dbReference type="NCBIfam" id="TIGR03319">
    <property type="entry name" value="RNase_Y"/>
    <property type="match status" value="1"/>
</dbReference>
<dbReference type="PANTHER" id="PTHR12826">
    <property type="entry name" value="RIBONUCLEASE Y"/>
    <property type="match status" value="1"/>
</dbReference>
<dbReference type="PANTHER" id="PTHR12826:SF15">
    <property type="entry name" value="RIBONUCLEASE Y"/>
    <property type="match status" value="1"/>
</dbReference>
<dbReference type="Pfam" id="PF01966">
    <property type="entry name" value="HD"/>
    <property type="match status" value="1"/>
</dbReference>
<dbReference type="Pfam" id="PF00013">
    <property type="entry name" value="KH_1"/>
    <property type="match status" value="1"/>
</dbReference>
<dbReference type="Pfam" id="PF12072">
    <property type="entry name" value="RNase_Y_N"/>
    <property type="match status" value="1"/>
</dbReference>
<dbReference type="SMART" id="SM00471">
    <property type="entry name" value="HDc"/>
    <property type="match status" value="1"/>
</dbReference>
<dbReference type="SMART" id="SM00322">
    <property type="entry name" value="KH"/>
    <property type="match status" value="1"/>
</dbReference>
<dbReference type="SUPFAM" id="SSF54791">
    <property type="entry name" value="Eukaryotic type KH-domain (KH-domain type I)"/>
    <property type="match status" value="1"/>
</dbReference>
<dbReference type="SUPFAM" id="SSF109604">
    <property type="entry name" value="HD-domain/PDEase-like"/>
    <property type="match status" value="1"/>
</dbReference>
<dbReference type="PROSITE" id="PS51831">
    <property type="entry name" value="HD"/>
    <property type="match status" value="1"/>
</dbReference>
<dbReference type="PROSITE" id="PS50084">
    <property type="entry name" value="KH_TYPE_1"/>
    <property type="match status" value="1"/>
</dbReference>
<keyword id="KW-1003">Cell membrane</keyword>
<keyword id="KW-0255">Endonuclease</keyword>
<keyword id="KW-0378">Hydrolase</keyword>
<keyword id="KW-0472">Membrane</keyword>
<keyword id="KW-0540">Nuclease</keyword>
<keyword id="KW-0694">RNA-binding</keyword>
<keyword id="KW-0812">Transmembrane</keyword>
<keyword id="KW-1133">Transmembrane helix</keyword>
<reference key="1">
    <citation type="submission" date="2007-03" db="EMBL/GenBank/DDBJ databases">
        <title>Complete sequence of Prosthecochloris vibrioformis DSM 265.</title>
        <authorList>
            <consortium name="US DOE Joint Genome Institute"/>
            <person name="Copeland A."/>
            <person name="Lucas S."/>
            <person name="Lapidus A."/>
            <person name="Barry K."/>
            <person name="Detter J.C."/>
            <person name="Glavina del Rio T."/>
            <person name="Hammon N."/>
            <person name="Israni S."/>
            <person name="Pitluck S."/>
            <person name="Schmutz J."/>
            <person name="Larimer F."/>
            <person name="Land M."/>
            <person name="Hauser L."/>
            <person name="Mikhailova N."/>
            <person name="Li T."/>
            <person name="Overmann J."/>
            <person name="Schuster S.C."/>
            <person name="Bryant D.A."/>
            <person name="Richardson P."/>
        </authorList>
    </citation>
    <scope>NUCLEOTIDE SEQUENCE [LARGE SCALE GENOMIC DNA]</scope>
    <source>
        <strain>DSM 265 / 1930</strain>
    </source>
</reference>
<evidence type="ECO:0000255" key="1">
    <source>
        <dbReference type="HAMAP-Rule" id="MF_00335"/>
    </source>
</evidence>
<evidence type="ECO:0000255" key="2">
    <source>
        <dbReference type="PROSITE-ProRule" id="PRU01175"/>
    </source>
</evidence>
<evidence type="ECO:0000256" key="3">
    <source>
        <dbReference type="SAM" id="MobiDB-lite"/>
    </source>
</evidence>
<gene>
    <name evidence="1" type="primary">rny</name>
    <name type="ordered locus">Cvib_1112</name>
</gene>
<name>RNY_CHLPM</name>